<feature type="chain" id="PRO_0000322470" description="A-type ATP synthase subunit A">
    <location>
        <begin position="1"/>
        <end position="592"/>
    </location>
</feature>
<feature type="binding site" evidence="1">
    <location>
        <begin position="234"/>
        <end position="241"/>
    </location>
    <ligand>
        <name>ATP</name>
        <dbReference type="ChEBI" id="CHEBI:30616"/>
    </ligand>
</feature>
<dbReference type="EC" id="7.1.2.2" evidence="1"/>
<dbReference type="EMBL" id="DP000238">
    <property type="protein sequence ID" value="ABK78068.1"/>
    <property type="molecule type" value="Genomic_DNA"/>
</dbReference>
<dbReference type="SMR" id="A0RXK1"/>
<dbReference type="STRING" id="414004.CENSYa_1446"/>
<dbReference type="EnsemblBacteria" id="ABK78068">
    <property type="protein sequence ID" value="ABK78068"/>
    <property type="gene ID" value="CENSYa_1446"/>
</dbReference>
<dbReference type="KEGG" id="csy:CENSYa_1446"/>
<dbReference type="PATRIC" id="fig|414004.10.peg.1330"/>
<dbReference type="HOGENOM" id="CLU_008162_3_1_2"/>
<dbReference type="Proteomes" id="UP000000758">
    <property type="component" value="Chromosome"/>
</dbReference>
<dbReference type="GO" id="GO:0005886">
    <property type="term" value="C:plasma membrane"/>
    <property type="evidence" value="ECO:0007669"/>
    <property type="project" value="UniProtKB-SubCell"/>
</dbReference>
<dbReference type="GO" id="GO:0005524">
    <property type="term" value="F:ATP binding"/>
    <property type="evidence" value="ECO:0007669"/>
    <property type="project" value="UniProtKB-UniRule"/>
</dbReference>
<dbReference type="GO" id="GO:0016887">
    <property type="term" value="F:ATP hydrolysis activity"/>
    <property type="evidence" value="ECO:0007669"/>
    <property type="project" value="InterPro"/>
</dbReference>
<dbReference type="GO" id="GO:0046933">
    <property type="term" value="F:proton-transporting ATP synthase activity, rotational mechanism"/>
    <property type="evidence" value="ECO:0007669"/>
    <property type="project" value="UniProtKB-UniRule"/>
</dbReference>
<dbReference type="GO" id="GO:0046961">
    <property type="term" value="F:proton-transporting ATPase activity, rotational mechanism"/>
    <property type="evidence" value="ECO:0007669"/>
    <property type="project" value="InterPro"/>
</dbReference>
<dbReference type="GO" id="GO:0042777">
    <property type="term" value="P:proton motive force-driven plasma membrane ATP synthesis"/>
    <property type="evidence" value="ECO:0007669"/>
    <property type="project" value="UniProtKB-UniRule"/>
</dbReference>
<dbReference type="CDD" id="cd18111">
    <property type="entry name" value="ATP-synt_V_A-type_alpha_C"/>
    <property type="match status" value="1"/>
</dbReference>
<dbReference type="CDD" id="cd18119">
    <property type="entry name" value="ATP-synt_V_A-type_alpha_N"/>
    <property type="match status" value="1"/>
</dbReference>
<dbReference type="CDD" id="cd01134">
    <property type="entry name" value="V_A-ATPase_A"/>
    <property type="match status" value="1"/>
</dbReference>
<dbReference type="FunFam" id="2.40.30.20:FF:000002">
    <property type="entry name" value="V-type proton ATPase catalytic subunit A"/>
    <property type="match status" value="1"/>
</dbReference>
<dbReference type="Gene3D" id="2.40.30.20">
    <property type="match status" value="1"/>
</dbReference>
<dbReference type="Gene3D" id="2.40.50.100">
    <property type="match status" value="1"/>
</dbReference>
<dbReference type="Gene3D" id="1.10.1140.10">
    <property type="entry name" value="Bovine Mitochondrial F1-atpase, Atp Synthase Beta Chain, Chain D, domain 3"/>
    <property type="match status" value="1"/>
</dbReference>
<dbReference type="Gene3D" id="3.40.50.300">
    <property type="entry name" value="P-loop containing nucleotide triphosphate hydrolases"/>
    <property type="match status" value="1"/>
</dbReference>
<dbReference type="HAMAP" id="MF_00309">
    <property type="entry name" value="ATP_synth_A_arch"/>
    <property type="match status" value="1"/>
</dbReference>
<dbReference type="InterPro" id="IPR003593">
    <property type="entry name" value="AAA+_ATPase"/>
</dbReference>
<dbReference type="InterPro" id="IPR055190">
    <property type="entry name" value="ATP-synt_VA_C"/>
</dbReference>
<dbReference type="InterPro" id="IPR031686">
    <property type="entry name" value="ATP-synth_a_Xtn"/>
</dbReference>
<dbReference type="InterPro" id="IPR023366">
    <property type="entry name" value="ATP_synth_asu-like_sf"/>
</dbReference>
<dbReference type="InterPro" id="IPR020003">
    <property type="entry name" value="ATPase_a/bsu_AS"/>
</dbReference>
<dbReference type="InterPro" id="IPR004100">
    <property type="entry name" value="ATPase_F1/V1/A1_a/bsu_N"/>
</dbReference>
<dbReference type="InterPro" id="IPR036121">
    <property type="entry name" value="ATPase_F1/V1/A1_a/bsu_N_sf"/>
</dbReference>
<dbReference type="InterPro" id="IPR000194">
    <property type="entry name" value="ATPase_F1/V1/A1_a/bsu_nucl-bd"/>
</dbReference>
<dbReference type="InterPro" id="IPR024034">
    <property type="entry name" value="ATPase_F1/V1_b/a_C"/>
</dbReference>
<dbReference type="InterPro" id="IPR027417">
    <property type="entry name" value="P-loop_NTPase"/>
</dbReference>
<dbReference type="InterPro" id="IPR022878">
    <property type="entry name" value="V-ATPase_asu"/>
</dbReference>
<dbReference type="NCBIfam" id="NF003220">
    <property type="entry name" value="PRK04192.1"/>
    <property type="match status" value="1"/>
</dbReference>
<dbReference type="PANTHER" id="PTHR43607:SF1">
    <property type="entry name" value="H(+)-TRANSPORTING TWO-SECTOR ATPASE"/>
    <property type="match status" value="1"/>
</dbReference>
<dbReference type="PANTHER" id="PTHR43607">
    <property type="entry name" value="V-TYPE PROTON ATPASE CATALYTIC SUBUNIT A"/>
    <property type="match status" value="1"/>
</dbReference>
<dbReference type="Pfam" id="PF00006">
    <property type="entry name" value="ATP-synt_ab"/>
    <property type="match status" value="1"/>
</dbReference>
<dbReference type="Pfam" id="PF02874">
    <property type="entry name" value="ATP-synt_ab_N"/>
    <property type="match status" value="1"/>
</dbReference>
<dbReference type="Pfam" id="PF16886">
    <property type="entry name" value="ATP-synt_ab_Xtn"/>
    <property type="match status" value="1"/>
</dbReference>
<dbReference type="Pfam" id="PF22919">
    <property type="entry name" value="ATP-synt_VA_C"/>
    <property type="match status" value="1"/>
</dbReference>
<dbReference type="SMART" id="SM00382">
    <property type="entry name" value="AAA"/>
    <property type="match status" value="1"/>
</dbReference>
<dbReference type="SUPFAM" id="SSF47917">
    <property type="entry name" value="C-terminal domain of alpha and beta subunits of F1 ATP synthase"/>
    <property type="match status" value="1"/>
</dbReference>
<dbReference type="SUPFAM" id="SSF50615">
    <property type="entry name" value="N-terminal domain of alpha and beta subunits of F1 ATP synthase"/>
    <property type="match status" value="1"/>
</dbReference>
<dbReference type="SUPFAM" id="SSF52540">
    <property type="entry name" value="P-loop containing nucleoside triphosphate hydrolases"/>
    <property type="match status" value="1"/>
</dbReference>
<dbReference type="PROSITE" id="PS00152">
    <property type="entry name" value="ATPASE_ALPHA_BETA"/>
    <property type="match status" value="1"/>
</dbReference>
<proteinExistence type="inferred from homology"/>
<organism>
    <name type="scientific">Cenarchaeum symbiosum (strain A)</name>
    <dbReference type="NCBI Taxonomy" id="414004"/>
    <lineage>
        <taxon>Archaea</taxon>
        <taxon>Nitrososphaerota</taxon>
        <taxon>Candidatus Cenarchaeales</taxon>
        <taxon>Candidatus Cenarchaeaceae</taxon>
        <taxon>Candidatus Cenarchaeum</taxon>
    </lineage>
</organism>
<protein>
    <recommendedName>
        <fullName evidence="1">A-type ATP synthase subunit A</fullName>
        <ecNumber evidence="1">7.1.2.2</ecNumber>
    </recommendedName>
</protein>
<sequence length="592" mass="65212">MTARGKIVWVSGPAVKADGMSEAKMYETVTVGEARLIGEVIRLTGDVAFIQVYESTSGLKPGEPVEGTGNPLSVLLGPGIIGQIYDGIQRPLKELSKKSGSFIGRGITTSPVDMTKKYHFVPSVSVGDDVIPGTVIGTVKETDLIDHSIMVPPDHAGGKIKSIVSEGEYDLETEMAGIEKDGKTIPLKMYHRWPVRQPRSYHTKYDPTVPLITGQRVIDTFFPIAKGGTGSIPGGFGTGKTVTLHQIAKWADSQVVVYIGCGERGNEMTEVLVEFPHLKDPRTDKPLMDRTVLVANTSNMPVAAREASIYTGVTIAEYYRDMGKDVVLVADSTSRWAEALREMSGRLEEMPAEEGYPSYLASRLAEFYERAGRVRALGSPERNGSVTLVGAVSPSGGDFTEPVTTHTMRFIKTFWALDAKLAYSRHYPSINWMNSYSGYLADIAKWWGENVSKDWLDTRSEAYGILQREDTLKEIVRLLGPEALPDEEKLILEVARMMKIGLLQQNSFDDVDTYCSPEKQYKLLKMQVDFYKRGQQALKEGAELADIRAMPVISGLLKAKMDIKDDEMPKLDELAGAMDEQYKGITGVKVAS</sequence>
<gene>
    <name evidence="1" type="primary">atpA</name>
    <name type="ordered locus">CENSYa_1446</name>
</gene>
<comment type="function">
    <text evidence="1">Component of the A-type ATP synthase that produces ATP from ADP in the presence of a proton gradient across the membrane. The A chain is the catalytic subunit.</text>
</comment>
<comment type="catalytic activity">
    <reaction evidence="1">
        <text>ATP + H2O + 4 H(+)(in) = ADP + phosphate + 5 H(+)(out)</text>
        <dbReference type="Rhea" id="RHEA:57720"/>
        <dbReference type="ChEBI" id="CHEBI:15377"/>
        <dbReference type="ChEBI" id="CHEBI:15378"/>
        <dbReference type="ChEBI" id="CHEBI:30616"/>
        <dbReference type="ChEBI" id="CHEBI:43474"/>
        <dbReference type="ChEBI" id="CHEBI:456216"/>
        <dbReference type="EC" id="7.1.2.2"/>
    </reaction>
</comment>
<comment type="subunit">
    <text evidence="1">Has multiple subunits with at least A(3), B(3), C, D, E, F, H, I and proteolipid K(x).</text>
</comment>
<comment type="subcellular location">
    <subcellularLocation>
        <location evidence="1">Cell membrane</location>
        <topology evidence="1">Peripheral membrane protein</topology>
    </subcellularLocation>
</comment>
<comment type="similarity">
    <text evidence="1">Belongs to the ATPase alpha/beta chains family.</text>
</comment>
<evidence type="ECO:0000255" key="1">
    <source>
        <dbReference type="HAMAP-Rule" id="MF_00309"/>
    </source>
</evidence>
<name>AATA_CENSY</name>
<reference key="1">
    <citation type="journal article" date="2006" name="Proc. Natl. Acad. Sci. U.S.A.">
        <title>Genomic analysis of the uncultivated marine crenarchaeote Cenarchaeum symbiosum.</title>
        <authorList>
            <person name="Hallam S.J."/>
            <person name="Konstantinidis K.T."/>
            <person name="Putnam N."/>
            <person name="Schleper C."/>
            <person name="Watanabe Y."/>
            <person name="Sugahara J."/>
            <person name="Preston C."/>
            <person name="de la Torre J."/>
            <person name="Richardson P.M."/>
            <person name="DeLong E.F."/>
        </authorList>
    </citation>
    <scope>NUCLEOTIDE SEQUENCE [LARGE SCALE GENOMIC DNA]</scope>
    <source>
        <strain>A</strain>
    </source>
</reference>
<keyword id="KW-0066">ATP synthesis</keyword>
<keyword id="KW-0067">ATP-binding</keyword>
<keyword id="KW-1003">Cell membrane</keyword>
<keyword id="KW-0375">Hydrogen ion transport</keyword>
<keyword id="KW-0406">Ion transport</keyword>
<keyword id="KW-0472">Membrane</keyword>
<keyword id="KW-0547">Nucleotide-binding</keyword>
<keyword id="KW-1185">Reference proteome</keyword>
<keyword id="KW-1278">Translocase</keyword>
<keyword id="KW-0813">Transport</keyword>
<accession>A0RXK1</accession>